<comment type="function">
    <text evidence="1">Transfers the gamma-phosphate of ATP to the 4'-position of a tetraacyldisaccharide 1-phosphate intermediate (termed DS-1-P) to form tetraacyldisaccharide 1,4'-bis-phosphate (lipid IVA).</text>
</comment>
<comment type="catalytic activity">
    <reaction evidence="1">
        <text>a lipid A disaccharide + ATP = a lipid IVA + ADP + H(+)</text>
        <dbReference type="Rhea" id="RHEA:67840"/>
        <dbReference type="ChEBI" id="CHEBI:15378"/>
        <dbReference type="ChEBI" id="CHEBI:30616"/>
        <dbReference type="ChEBI" id="CHEBI:176343"/>
        <dbReference type="ChEBI" id="CHEBI:176425"/>
        <dbReference type="ChEBI" id="CHEBI:456216"/>
        <dbReference type="EC" id="2.7.1.130"/>
    </reaction>
</comment>
<comment type="pathway">
    <text evidence="1">Glycolipid biosynthesis; lipid IV(A) biosynthesis; lipid IV(A) from (3R)-3-hydroxytetradecanoyl-[acyl-carrier-protein] and UDP-N-acetyl-alpha-D-glucosamine: step 6/6.</text>
</comment>
<comment type="similarity">
    <text evidence="1">Belongs to the LpxK family.</text>
</comment>
<evidence type="ECO:0000255" key="1">
    <source>
        <dbReference type="HAMAP-Rule" id="MF_00409"/>
    </source>
</evidence>
<gene>
    <name evidence="1" type="primary">lpxK</name>
    <name type="ordered locus">PA2981</name>
</gene>
<keyword id="KW-0067">ATP-binding</keyword>
<keyword id="KW-0418">Kinase</keyword>
<keyword id="KW-0441">Lipid A biosynthesis</keyword>
<keyword id="KW-0444">Lipid biosynthesis</keyword>
<keyword id="KW-0443">Lipid metabolism</keyword>
<keyword id="KW-0547">Nucleotide-binding</keyword>
<keyword id="KW-1185">Reference proteome</keyword>
<keyword id="KW-0808">Transferase</keyword>
<protein>
    <recommendedName>
        <fullName evidence="1">Tetraacyldisaccharide 4'-kinase</fullName>
        <ecNumber evidence="1">2.7.1.130</ecNumber>
    </recommendedName>
    <alternativeName>
        <fullName evidence="1">Lipid A 4'-kinase</fullName>
    </alternativeName>
</protein>
<organism>
    <name type="scientific">Pseudomonas aeruginosa (strain ATCC 15692 / DSM 22644 / CIP 104116 / JCM 14847 / LMG 12228 / 1C / PRS 101 / PAO1)</name>
    <dbReference type="NCBI Taxonomy" id="208964"/>
    <lineage>
        <taxon>Bacteria</taxon>
        <taxon>Pseudomonadati</taxon>
        <taxon>Pseudomonadota</taxon>
        <taxon>Gammaproteobacteria</taxon>
        <taxon>Pseudomonadales</taxon>
        <taxon>Pseudomonadaceae</taxon>
        <taxon>Pseudomonas</taxon>
    </lineage>
</organism>
<sequence length="332" mass="36746">MSFSERLLAAWYQGHPALALLRPLEALYRRVANGRRADFLSGRKPAYRAPLPVLVVGNITVGGTGKTPMILWMIEHCRARGLRVGVISRGYGARPPTTPWRVRAEQDAAEAGDEPLMIVRRSGVPLMIDPDRPRALQALLAEEQLDLVLCDDGLQHYRLARDLELVLIDAARGLGNGRCLPAGPLREPAERLESVDALLYNGADEDPDGGYAFRLQPTALINLQSGERRPLEHFPAGQEVHALAGIGNPQRFFRTLEALHWRAIPHAFPDHATYTAAELAFSPPLPLLMTEKDAVKCRAFAAADWWYLAVDAVPSPAFVAWFDARLEHLLAR</sequence>
<accession>Q9HZM3</accession>
<feature type="chain" id="PRO_0000190937" description="Tetraacyldisaccharide 4'-kinase">
    <location>
        <begin position="1"/>
        <end position="332"/>
    </location>
</feature>
<feature type="binding site" evidence="1">
    <location>
        <begin position="60"/>
        <end position="67"/>
    </location>
    <ligand>
        <name>ATP</name>
        <dbReference type="ChEBI" id="CHEBI:30616"/>
    </ligand>
</feature>
<proteinExistence type="inferred from homology"/>
<name>LPXK_PSEAE</name>
<reference key="1">
    <citation type="journal article" date="2000" name="Nature">
        <title>Complete genome sequence of Pseudomonas aeruginosa PAO1, an opportunistic pathogen.</title>
        <authorList>
            <person name="Stover C.K."/>
            <person name="Pham X.-Q.T."/>
            <person name="Erwin A.L."/>
            <person name="Mizoguchi S.D."/>
            <person name="Warrener P."/>
            <person name="Hickey M.J."/>
            <person name="Brinkman F.S.L."/>
            <person name="Hufnagle W.O."/>
            <person name="Kowalik D.J."/>
            <person name="Lagrou M."/>
            <person name="Garber R.L."/>
            <person name="Goltry L."/>
            <person name="Tolentino E."/>
            <person name="Westbrock-Wadman S."/>
            <person name="Yuan Y."/>
            <person name="Brody L.L."/>
            <person name="Coulter S.N."/>
            <person name="Folger K.R."/>
            <person name="Kas A."/>
            <person name="Larbig K."/>
            <person name="Lim R.M."/>
            <person name="Smith K.A."/>
            <person name="Spencer D.H."/>
            <person name="Wong G.K.-S."/>
            <person name="Wu Z."/>
            <person name="Paulsen I.T."/>
            <person name="Reizer J."/>
            <person name="Saier M.H. Jr."/>
            <person name="Hancock R.E.W."/>
            <person name="Lory S."/>
            <person name="Olson M.V."/>
        </authorList>
    </citation>
    <scope>NUCLEOTIDE SEQUENCE [LARGE SCALE GENOMIC DNA]</scope>
    <source>
        <strain>ATCC 15692 / DSM 22644 / CIP 104116 / JCM 14847 / LMG 12228 / 1C / PRS 101 / PAO1</strain>
    </source>
</reference>
<dbReference type="EC" id="2.7.1.130" evidence="1"/>
<dbReference type="EMBL" id="AE004091">
    <property type="protein sequence ID" value="AAG06369.1"/>
    <property type="molecule type" value="Genomic_DNA"/>
</dbReference>
<dbReference type="PIR" id="E83274">
    <property type="entry name" value="E83274"/>
</dbReference>
<dbReference type="RefSeq" id="NP_251671.1">
    <property type="nucleotide sequence ID" value="NC_002516.2"/>
</dbReference>
<dbReference type="RefSeq" id="WP_003091159.1">
    <property type="nucleotide sequence ID" value="NZ_QZGE01000009.1"/>
</dbReference>
<dbReference type="SMR" id="Q9HZM3"/>
<dbReference type="FunCoup" id="Q9HZM3">
    <property type="interactions" value="297"/>
</dbReference>
<dbReference type="STRING" id="208964.PA2981"/>
<dbReference type="PaxDb" id="208964-PA2981"/>
<dbReference type="GeneID" id="880503"/>
<dbReference type="KEGG" id="pae:PA2981"/>
<dbReference type="PATRIC" id="fig|208964.12.peg.3128"/>
<dbReference type="PseudoCAP" id="PA2981"/>
<dbReference type="HOGENOM" id="CLU_038816_2_0_6"/>
<dbReference type="InParanoid" id="Q9HZM3"/>
<dbReference type="OrthoDB" id="9766423at2"/>
<dbReference type="PhylomeDB" id="Q9HZM3"/>
<dbReference type="BioCyc" id="PAER208964:G1FZ6-3033-MONOMER"/>
<dbReference type="BRENDA" id="2.7.1.130">
    <property type="organism ID" value="5087"/>
</dbReference>
<dbReference type="UniPathway" id="UPA00359">
    <property type="reaction ID" value="UER00482"/>
</dbReference>
<dbReference type="Proteomes" id="UP000002438">
    <property type="component" value="Chromosome"/>
</dbReference>
<dbReference type="GO" id="GO:0005886">
    <property type="term" value="C:plasma membrane"/>
    <property type="evidence" value="ECO:0000318"/>
    <property type="project" value="GO_Central"/>
</dbReference>
<dbReference type="GO" id="GO:0005524">
    <property type="term" value="F:ATP binding"/>
    <property type="evidence" value="ECO:0007669"/>
    <property type="project" value="UniProtKB-UniRule"/>
</dbReference>
<dbReference type="GO" id="GO:0009029">
    <property type="term" value="F:tetraacyldisaccharide 4'-kinase activity"/>
    <property type="evidence" value="ECO:0000318"/>
    <property type="project" value="GO_Central"/>
</dbReference>
<dbReference type="GO" id="GO:0009245">
    <property type="term" value="P:lipid A biosynthetic process"/>
    <property type="evidence" value="ECO:0000318"/>
    <property type="project" value="GO_Central"/>
</dbReference>
<dbReference type="GO" id="GO:0009244">
    <property type="term" value="P:lipopolysaccharide core region biosynthetic process"/>
    <property type="evidence" value="ECO:0000318"/>
    <property type="project" value="GO_Central"/>
</dbReference>
<dbReference type="HAMAP" id="MF_00409">
    <property type="entry name" value="LpxK"/>
    <property type="match status" value="1"/>
</dbReference>
<dbReference type="InterPro" id="IPR003758">
    <property type="entry name" value="LpxK"/>
</dbReference>
<dbReference type="InterPro" id="IPR027417">
    <property type="entry name" value="P-loop_NTPase"/>
</dbReference>
<dbReference type="NCBIfam" id="TIGR00682">
    <property type="entry name" value="lpxK"/>
    <property type="match status" value="1"/>
</dbReference>
<dbReference type="PANTHER" id="PTHR42724">
    <property type="entry name" value="TETRAACYLDISACCHARIDE 4'-KINASE"/>
    <property type="match status" value="1"/>
</dbReference>
<dbReference type="PANTHER" id="PTHR42724:SF1">
    <property type="entry name" value="TETRAACYLDISACCHARIDE 4'-KINASE, MITOCHONDRIAL-RELATED"/>
    <property type="match status" value="1"/>
</dbReference>
<dbReference type="Pfam" id="PF02606">
    <property type="entry name" value="LpxK"/>
    <property type="match status" value="1"/>
</dbReference>
<dbReference type="SUPFAM" id="SSF52540">
    <property type="entry name" value="P-loop containing nucleoside triphosphate hydrolases"/>
    <property type="match status" value="1"/>
</dbReference>